<proteinExistence type="inferred from homology"/>
<evidence type="ECO:0000255" key="1">
    <source>
        <dbReference type="HAMAP-Rule" id="MF_00213"/>
    </source>
</evidence>
<protein>
    <recommendedName>
        <fullName evidence="1">Hydrogenase maturation factor HypA</fullName>
    </recommendedName>
</protein>
<keyword id="KW-0479">Metal-binding</keyword>
<keyword id="KW-0533">Nickel</keyword>
<keyword id="KW-1185">Reference proteome</keyword>
<keyword id="KW-0862">Zinc</keyword>
<name>HYPA_LAWIP</name>
<organism>
    <name type="scientific">Lawsonia intracellularis (strain PHE/MN1-00)</name>
    <dbReference type="NCBI Taxonomy" id="363253"/>
    <lineage>
        <taxon>Bacteria</taxon>
        <taxon>Pseudomonadati</taxon>
        <taxon>Thermodesulfobacteriota</taxon>
        <taxon>Desulfovibrionia</taxon>
        <taxon>Desulfovibrionales</taxon>
        <taxon>Desulfovibrionaceae</taxon>
        <taxon>Lawsonia</taxon>
    </lineage>
</organism>
<comment type="function">
    <text evidence="1">Involved in the maturation of [NiFe] hydrogenases. Required for nickel insertion into the metal center of the hydrogenase.</text>
</comment>
<comment type="similarity">
    <text evidence="1">Belongs to the HypA/HybF family.</text>
</comment>
<feature type="chain" id="PRO_1000023831" description="Hydrogenase maturation factor HypA">
    <location>
        <begin position="1"/>
        <end position="118"/>
    </location>
</feature>
<feature type="binding site" evidence="1">
    <location>
        <position position="2"/>
    </location>
    <ligand>
        <name>Ni(2+)</name>
        <dbReference type="ChEBI" id="CHEBI:49786"/>
    </ligand>
</feature>
<feature type="binding site" evidence="1">
    <location>
        <position position="73"/>
    </location>
    <ligand>
        <name>Zn(2+)</name>
        <dbReference type="ChEBI" id="CHEBI:29105"/>
    </ligand>
</feature>
<feature type="binding site" evidence="1">
    <location>
        <position position="76"/>
    </location>
    <ligand>
        <name>Zn(2+)</name>
        <dbReference type="ChEBI" id="CHEBI:29105"/>
    </ligand>
</feature>
<feature type="binding site" evidence="1">
    <location>
        <position position="93"/>
    </location>
    <ligand>
        <name>Zn(2+)</name>
        <dbReference type="ChEBI" id="CHEBI:29105"/>
    </ligand>
</feature>
<feature type="binding site" evidence="1">
    <location>
        <position position="96"/>
    </location>
    <ligand>
        <name>Zn(2+)</name>
        <dbReference type="ChEBI" id="CHEBI:29105"/>
    </ligand>
</feature>
<dbReference type="EMBL" id="AM180252">
    <property type="protein sequence ID" value="CAJ54302.1"/>
    <property type="molecule type" value="Genomic_DNA"/>
</dbReference>
<dbReference type="RefSeq" id="WP_011526328.1">
    <property type="nucleotide sequence ID" value="NC_008011.1"/>
</dbReference>
<dbReference type="SMR" id="Q1MRS4"/>
<dbReference type="STRING" id="363253.LI0246"/>
<dbReference type="KEGG" id="lip:LI0246"/>
<dbReference type="eggNOG" id="COG0375">
    <property type="taxonomic scope" value="Bacteria"/>
</dbReference>
<dbReference type="HOGENOM" id="CLU_126929_4_0_7"/>
<dbReference type="OrthoDB" id="9800361at2"/>
<dbReference type="Proteomes" id="UP000002430">
    <property type="component" value="Chromosome"/>
</dbReference>
<dbReference type="GO" id="GO:0016151">
    <property type="term" value="F:nickel cation binding"/>
    <property type="evidence" value="ECO:0007669"/>
    <property type="project" value="UniProtKB-UniRule"/>
</dbReference>
<dbReference type="GO" id="GO:0008270">
    <property type="term" value="F:zinc ion binding"/>
    <property type="evidence" value="ECO:0007669"/>
    <property type="project" value="UniProtKB-UniRule"/>
</dbReference>
<dbReference type="GO" id="GO:0051604">
    <property type="term" value="P:protein maturation"/>
    <property type="evidence" value="ECO:0007669"/>
    <property type="project" value="InterPro"/>
</dbReference>
<dbReference type="GO" id="GO:0036211">
    <property type="term" value="P:protein modification process"/>
    <property type="evidence" value="ECO:0007669"/>
    <property type="project" value="UniProtKB-UniRule"/>
</dbReference>
<dbReference type="Gene3D" id="3.30.2320.80">
    <property type="match status" value="1"/>
</dbReference>
<dbReference type="HAMAP" id="MF_00213">
    <property type="entry name" value="HypA_HybF"/>
    <property type="match status" value="1"/>
</dbReference>
<dbReference type="InterPro" id="IPR020538">
    <property type="entry name" value="Hydgase_Ni_incorp_HypA/HybF_CS"/>
</dbReference>
<dbReference type="InterPro" id="IPR000688">
    <property type="entry name" value="HypA/HybF"/>
</dbReference>
<dbReference type="NCBIfam" id="TIGR00100">
    <property type="entry name" value="hypA"/>
    <property type="match status" value="1"/>
</dbReference>
<dbReference type="PANTHER" id="PTHR34535">
    <property type="entry name" value="HYDROGENASE MATURATION FACTOR HYPA"/>
    <property type="match status" value="1"/>
</dbReference>
<dbReference type="PANTHER" id="PTHR34535:SF3">
    <property type="entry name" value="HYDROGENASE MATURATION FACTOR HYPA"/>
    <property type="match status" value="1"/>
</dbReference>
<dbReference type="Pfam" id="PF01155">
    <property type="entry name" value="HypA"/>
    <property type="match status" value="1"/>
</dbReference>
<dbReference type="PIRSF" id="PIRSF004761">
    <property type="entry name" value="Hydrgn_mat_HypA"/>
    <property type="match status" value="1"/>
</dbReference>
<dbReference type="PROSITE" id="PS01249">
    <property type="entry name" value="HYPA"/>
    <property type="match status" value="1"/>
</dbReference>
<gene>
    <name evidence="1" type="primary">hypA</name>
    <name type="ordered locus">LI0246</name>
</gene>
<accession>Q1MRS4</accession>
<reference key="1">
    <citation type="submission" date="2005-11" db="EMBL/GenBank/DDBJ databases">
        <title>The complete genome sequence of Lawsonia intracellularis: the causative agent of proliferative enteropathy.</title>
        <authorList>
            <person name="Kaur K."/>
            <person name="Zhang Q."/>
            <person name="Beckler D."/>
            <person name="Munir S."/>
            <person name="Li L."/>
            <person name="Kinsley K."/>
            <person name="Herron L."/>
            <person name="Peterson A."/>
            <person name="May B."/>
            <person name="Singh S."/>
            <person name="Gebhart C."/>
            <person name="Kapur V."/>
        </authorList>
    </citation>
    <scope>NUCLEOTIDE SEQUENCE [LARGE SCALE GENOMIC DNA]</scope>
    <source>
        <strain>PHE/MN1-00</strain>
    </source>
</reference>
<sequence length="118" mass="13468">MHEMSLVTGILSIIQEEMSKNGVNKLQRVKVCYGELTNIVPDSLQFAFKIFTEGTSLEGAILEIEKIPLMLRCSNCLSLFTPEDKQKIFFITCPSCKKEVAYNVETGREFYIQHLEVE</sequence>